<feature type="chain" id="PRO_0000198956" description="Cell division control protein 42 homolog">
    <location>
        <begin position="1"/>
        <end position="188"/>
    </location>
</feature>
<feature type="propeptide" id="PRO_0000281286" description="Removed in mature form" evidence="1">
    <location>
        <begin position="189"/>
        <end position="191"/>
    </location>
</feature>
<feature type="short sequence motif" description="Effector region" evidence="4">
    <location>
        <begin position="32"/>
        <end position="40"/>
    </location>
</feature>
<feature type="binding site" evidence="1">
    <location>
        <begin position="10"/>
        <end position="17"/>
    </location>
    <ligand>
        <name>GTP</name>
        <dbReference type="ChEBI" id="CHEBI:37565"/>
    </ligand>
</feature>
<feature type="binding site" evidence="1">
    <location>
        <begin position="57"/>
        <end position="61"/>
    </location>
    <ligand>
        <name>GTP</name>
        <dbReference type="ChEBI" id="CHEBI:37565"/>
    </ligand>
</feature>
<feature type="binding site" evidence="1">
    <location>
        <begin position="115"/>
        <end position="118"/>
    </location>
    <ligand>
        <name>GTP</name>
        <dbReference type="ChEBI" id="CHEBI:37565"/>
    </ligand>
</feature>
<feature type="modified residue" description="Cysteine methyl ester" evidence="1">
    <location>
        <position position="188"/>
    </location>
</feature>
<feature type="lipid moiety-binding region" description="S-geranylgeranyl cysteine" evidence="1">
    <location>
        <position position="188"/>
    </location>
</feature>
<keyword id="KW-1003">Cell membrane</keyword>
<keyword id="KW-0966">Cell projection</keyword>
<keyword id="KW-0963">Cytoplasm</keyword>
<keyword id="KW-0206">Cytoskeleton</keyword>
<keyword id="KW-0221">Differentiation</keyword>
<keyword id="KW-0342">GTP-binding</keyword>
<keyword id="KW-0378">Hydrolase</keyword>
<keyword id="KW-0449">Lipoprotein</keyword>
<keyword id="KW-0472">Membrane</keyword>
<keyword id="KW-0488">Methylation</keyword>
<keyword id="KW-0524">Neurogenesis</keyword>
<keyword id="KW-0547">Nucleotide-binding</keyword>
<keyword id="KW-0636">Prenylation</keyword>
<keyword id="KW-1185">Reference proteome</keyword>
<protein>
    <recommendedName>
        <fullName>Cell division control protein 42 homolog</fullName>
        <ecNumber evidence="2 3">3.6.5.2</ecNumber>
    </recommendedName>
    <alternativeName>
        <fullName>G25K GTP-binding protein</fullName>
    </alternativeName>
</protein>
<accession>Q90694</accession>
<sequence length="191" mass="21273">MQTIKCVVVGDGAVGKTCLLISYTTNKFPSEYVPTVFDNYAVTVMIGGEPYTLGLFDTAGQEDYDRLRPLSYPQTDVFLVCFSVVSPSSFENVKEKWVPEITHHCPKTPFLLVGTQIDLRDDPSTIEKLAKNKQKPITPETAEKLARDLKAVKYVECSALTQKGLKNVFDEAILAALEPPEPKKTRRCVLL</sequence>
<dbReference type="EC" id="3.6.5.2" evidence="2 3"/>
<dbReference type="EMBL" id="U40848">
    <property type="protein sequence ID" value="AAC00027.1"/>
    <property type="molecule type" value="mRNA"/>
</dbReference>
<dbReference type="RefSeq" id="NP_990379.1">
    <property type="nucleotide sequence ID" value="NM_205048.2"/>
</dbReference>
<dbReference type="RefSeq" id="XP_015152311.1">
    <property type="nucleotide sequence ID" value="XM_015296825.1"/>
</dbReference>
<dbReference type="RefSeq" id="XP_015152312.1">
    <property type="nucleotide sequence ID" value="XM_015296826.4"/>
</dbReference>
<dbReference type="RefSeq" id="XP_040507034.1">
    <property type="nucleotide sequence ID" value="XM_040651100.2"/>
</dbReference>
<dbReference type="RefSeq" id="XP_046787102.1">
    <property type="nucleotide sequence ID" value="XM_046931146.1"/>
</dbReference>
<dbReference type="RefSeq" id="XP_046787104.1">
    <property type="nucleotide sequence ID" value="XM_046931148.1"/>
</dbReference>
<dbReference type="SMR" id="Q90694"/>
<dbReference type="FunCoup" id="Q90694">
    <property type="interactions" value="3294"/>
</dbReference>
<dbReference type="MINT" id="Q90694"/>
<dbReference type="STRING" id="9031.ENSGALP00000065867"/>
<dbReference type="PaxDb" id="9031-ENSGALP00000034254"/>
<dbReference type="Ensembl" id="ENSGALT00010053066.1">
    <property type="protein sequence ID" value="ENSGALP00010031960.1"/>
    <property type="gene ID" value="ENSGALG00010021807.1"/>
</dbReference>
<dbReference type="GeneID" id="395917"/>
<dbReference type="KEGG" id="gga:395917"/>
<dbReference type="CTD" id="998"/>
<dbReference type="VEuPathDB" id="HostDB:geneid_395917"/>
<dbReference type="eggNOG" id="KOG0393">
    <property type="taxonomic scope" value="Eukaryota"/>
</dbReference>
<dbReference type="GeneTree" id="ENSGT00940000153675"/>
<dbReference type="HOGENOM" id="CLU_041217_21_3_1"/>
<dbReference type="InParanoid" id="Q90694"/>
<dbReference type="OrthoDB" id="8830751at2759"/>
<dbReference type="PhylomeDB" id="Q90694"/>
<dbReference type="Reactome" id="R-GGA-114604">
    <property type="pathway name" value="GPVI-mediated activation cascade"/>
</dbReference>
<dbReference type="Reactome" id="R-GGA-182971">
    <property type="pathway name" value="EGFR downregulation"/>
</dbReference>
<dbReference type="Reactome" id="R-GGA-2029482">
    <property type="pathway name" value="Regulation of actin dynamics for phagocytic cup formation"/>
</dbReference>
<dbReference type="Reactome" id="R-GGA-389359">
    <property type="pathway name" value="CD28 dependent Vav1 pathway"/>
</dbReference>
<dbReference type="Reactome" id="R-GGA-3928662">
    <property type="pathway name" value="EPHB-mediated forward signaling"/>
</dbReference>
<dbReference type="Reactome" id="R-GGA-4420097">
    <property type="pathway name" value="VEGFA-VEGFR2 Pathway"/>
</dbReference>
<dbReference type="Reactome" id="R-GGA-525793">
    <property type="pathway name" value="Myogenesis"/>
</dbReference>
<dbReference type="Reactome" id="R-GGA-5625970">
    <property type="pathway name" value="RHO GTPases activate KTN1"/>
</dbReference>
<dbReference type="Reactome" id="R-GGA-5626467">
    <property type="pathway name" value="RHO GTPases activate IQGAPs"/>
</dbReference>
<dbReference type="Reactome" id="R-GGA-5627123">
    <property type="pathway name" value="RHO GTPases activate PAKs"/>
</dbReference>
<dbReference type="Reactome" id="R-GGA-5663213">
    <property type="pathway name" value="RHO GTPases Activate WASPs and WAVEs"/>
</dbReference>
<dbReference type="Reactome" id="R-GGA-5663220">
    <property type="pathway name" value="RHO GTPases Activate Formins"/>
</dbReference>
<dbReference type="Reactome" id="R-GGA-5687128">
    <property type="pathway name" value="MAPK6/MAPK4 signaling"/>
</dbReference>
<dbReference type="Reactome" id="R-GGA-8964616">
    <property type="pathway name" value="G beta:gamma signalling through CDC42"/>
</dbReference>
<dbReference type="Reactome" id="R-GGA-9013148">
    <property type="pathway name" value="CDC42 GTPase cycle"/>
</dbReference>
<dbReference type="Reactome" id="R-GGA-9013149">
    <property type="pathway name" value="RAC1 GTPase cycle"/>
</dbReference>
<dbReference type="Reactome" id="R-GGA-9013404">
    <property type="pathway name" value="RAC2 GTPase cycle"/>
</dbReference>
<dbReference type="Reactome" id="R-GGA-9013406">
    <property type="pathway name" value="RHOQ GTPase cycle"/>
</dbReference>
<dbReference type="Reactome" id="R-GGA-9013408">
    <property type="pathway name" value="RHOG GTPase cycle"/>
</dbReference>
<dbReference type="Reactome" id="R-GGA-9013420">
    <property type="pathway name" value="RHOU GTPase cycle"/>
</dbReference>
<dbReference type="Reactome" id="R-GGA-9013423">
    <property type="pathway name" value="RAC3 GTPase cycle"/>
</dbReference>
<dbReference type="Reactome" id="R-GGA-9013424">
    <property type="pathway name" value="RHOV GTPase cycle"/>
</dbReference>
<dbReference type="Reactome" id="R-GGA-983231">
    <property type="pathway name" value="Factors involved in megakaryocyte development and platelet production"/>
</dbReference>
<dbReference type="PRO" id="PR:Q90694"/>
<dbReference type="Proteomes" id="UP000000539">
    <property type="component" value="Chromosome 21"/>
</dbReference>
<dbReference type="Bgee" id="ENSGALG00000004796">
    <property type="expression patterns" value="Expressed in colon and 12 other cell types or tissues"/>
</dbReference>
<dbReference type="GO" id="GO:0045177">
    <property type="term" value="C:apical part of cell"/>
    <property type="evidence" value="ECO:0007669"/>
    <property type="project" value="Ensembl"/>
</dbReference>
<dbReference type="GO" id="GO:0042995">
    <property type="term" value="C:cell projection"/>
    <property type="evidence" value="ECO:0000250"/>
    <property type="project" value="AgBase"/>
</dbReference>
<dbReference type="GO" id="GO:0005911">
    <property type="term" value="C:cell-cell junction"/>
    <property type="evidence" value="ECO:0007669"/>
    <property type="project" value="Ensembl"/>
</dbReference>
<dbReference type="GO" id="GO:0005813">
    <property type="term" value="C:centrosome"/>
    <property type="evidence" value="ECO:0007669"/>
    <property type="project" value="UniProtKB-SubCell"/>
</dbReference>
<dbReference type="GO" id="GO:0005737">
    <property type="term" value="C:cytoplasm"/>
    <property type="evidence" value="ECO:0000250"/>
    <property type="project" value="AgBase"/>
</dbReference>
<dbReference type="GO" id="GO:0036464">
    <property type="term" value="C:cytoplasmic ribonucleoprotein granule"/>
    <property type="evidence" value="ECO:0007669"/>
    <property type="project" value="Ensembl"/>
</dbReference>
<dbReference type="GO" id="GO:0005829">
    <property type="term" value="C:cytosol"/>
    <property type="evidence" value="ECO:0007669"/>
    <property type="project" value="Ensembl"/>
</dbReference>
<dbReference type="GO" id="GO:0030425">
    <property type="term" value="C:dendrite"/>
    <property type="evidence" value="ECO:0007669"/>
    <property type="project" value="UniProtKB-SubCell"/>
</dbReference>
<dbReference type="GO" id="GO:0030175">
    <property type="term" value="C:filopodium"/>
    <property type="evidence" value="ECO:0000250"/>
    <property type="project" value="AgBase"/>
</dbReference>
<dbReference type="GO" id="GO:0098978">
    <property type="term" value="C:glutamatergic synapse"/>
    <property type="evidence" value="ECO:0007669"/>
    <property type="project" value="Ensembl"/>
</dbReference>
<dbReference type="GO" id="GO:0017119">
    <property type="term" value="C:Golgi transport complex"/>
    <property type="evidence" value="ECO:0007669"/>
    <property type="project" value="Ensembl"/>
</dbReference>
<dbReference type="GO" id="GO:0031256">
    <property type="term" value="C:leading edge membrane"/>
    <property type="evidence" value="ECO:0007669"/>
    <property type="project" value="Ensembl"/>
</dbReference>
<dbReference type="GO" id="GO:0016020">
    <property type="term" value="C:membrane"/>
    <property type="evidence" value="ECO:0000250"/>
    <property type="project" value="UniProtKB"/>
</dbReference>
<dbReference type="GO" id="GO:0030496">
    <property type="term" value="C:midbody"/>
    <property type="evidence" value="ECO:0000250"/>
    <property type="project" value="UniProtKB"/>
</dbReference>
<dbReference type="GO" id="GO:0072686">
    <property type="term" value="C:mitotic spindle"/>
    <property type="evidence" value="ECO:0000250"/>
    <property type="project" value="UniProtKB"/>
</dbReference>
<dbReference type="GO" id="GO:0043025">
    <property type="term" value="C:neuronal cell body"/>
    <property type="evidence" value="ECO:0007669"/>
    <property type="project" value="Ensembl"/>
</dbReference>
<dbReference type="GO" id="GO:0045335">
    <property type="term" value="C:phagocytic vesicle"/>
    <property type="evidence" value="ECO:0007669"/>
    <property type="project" value="Ensembl"/>
</dbReference>
<dbReference type="GO" id="GO:0005886">
    <property type="term" value="C:plasma membrane"/>
    <property type="evidence" value="ECO:0000250"/>
    <property type="project" value="AgBase"/>
</dbReference>
<dbReference type="GO" id="GO:0098794">
    <property type="term" value="C:postsynapse"/>
    <property type="evidence" value="ECO:0007669"/>
    <property type="project" value="Ensembl"/>
</dbReference>
<dbReference type="GO" id="GO:0051233">
    <property type="term" value="C:spindle midzone"/>
    <property type="evidence" value="ECO:0000250"/>
    <property type="project" value="UniProtKB"/>
</dbReference>
<dbReference type="GO" id="GO:0000322">
    <property type="term" value="C:storage vacuole"/>
    <property type="evidence" value="ECO:0007669"/>
    <property type="project" value="Ensembl"/>
</dbReference>
<dbReference type="GO" id="GO:0034191">
    <property type="term" value="F:apolipoprotein A-I receptor binding"/>
    <property type="evidence" value="ECO:0007669"/>
    <property type="project" value="Ensembl"/>
</dbReference>
<dbReference type="GO" id="GO:0003925">
    <property type="term" value="F:G protein activity"/>
    <property type="evidence" value="ECO:0007669"/>
    <property type="project" value="UniProtKB-EC"/>
</dbReference>
<dbReference type="GO" id="GO:0032427">
    <property type="term" value="F:GBD domain binding"/>
    <property type="evidence" value="ECO:0007669"/>
    <property type="project" value="Ensembl"/>
</dbReference>
<dbReference type="GO" id="GO:0005525">
    <property type="term" value="F:GTP binding"/>
    <property type="evidence" value="ECO:0000318"/>
    <property type="project" value="GO_Central"/>
</dbReference>
<dbReference type="GO" id="GO:0030742">
    <property type="term" value="F:GTP-dependent protein binding"/>
    <property type="evidence" value="ECO:0007669"/>
    <property type="project" value="Ensembl"/>
</dbReference>
<dbReference type="GO" id="GO:0003924">
    <property type="term" value="F:GTPase activity"/>
    <property type="evidence" value="ECO:0000250"/>
    <property type="project" value="AgBase"/>
</dbReference>
<dbReference type="GO" id="GO:0042802">
    <property type="term" value="F:identical protein binding"/>
    <property type="evidence" value="ECO:0007669"/>
    <property type="project" value="Ensembl"/>
</dbReference>
<dbReference type="GO" id="GO:0019901">
    <property type="term" value="F:protein kinase binding"/>
    <property type="evidence" value="ECO:0000318"/>
    <property type="project" value="GO_Central"/>
</dbReference>
<dbReference type="GO" id="GO:0031996">
    <property type="term" value="F:thioesterase binding"/>
    <property type="evidence" value="ECO:0007669"/>
    <property type="project" value="Ensembl"/>
</dbReference>
<dbReference type="GO" id="GO:0061630">
    <property type="term" value="F:ubiquitin protein ligase activity"/>
    <property type="evidence" value="ECO:0007669"/>
    <property type="project" value="Ensembl"/>
</dbReference>
<dbReference type="GO" id="GO:0030036">
    <property type="term" value="P:actin cytoskeleton organization"/>
    <property type="evidence" value="ECO:0000250"/>
    <property type="project" value="AgBase"/>
</dbReference>
<dbReference type="GO" id="GO:0007015">
    <property type="term" value="P:actin filament organization"/>
    <property type="evidence" value="ECO:0000250"/>
    <property type="project" value="UniProtKB"/>
</dbReference>
<dbReference type="GO" id="GO:0034332">
    <property type="term" value="P:adherens junction organization"/>
    <property type="evidence" value="ECO:0007669"/>
    <property type="project" value="Ensembl"/>
</dbReference>
<dbReference type="GO" id="GO:0003161">
    <property type="term" value="P:cardiac conduction system development"/>
    <property type="evidence" value="ECO:0007669"/>
    <property type="project" value="Ensembl"/>
</dbReference>
<dbReference type="GO" id="GO:0003253">
    <property type="term" value="P:cardiac neural crest cell migration involved in outflow tract morphogenesis"/>
    <property type="evidence" value="ECO:0007669"/>
    <property type="project" value="Ensembl"/>
</dbReference>
<dbReference type="GO" id="GO:0034329">
    <property type="term" value="P:cell junction assembly"/>
    <property type="evidence" value="ECO:0000250"/>
    <property type="project" value="UniProtKB"/>
</dbReference>
<dbReference type="GO" id="GO:0071346">
    <property type="term" value="P:cellular response to type II interferon"/>
    <property type="evidence" value="ECO:0007669"/>
    <property type="project" value="Ensembl"/>
</dbReference>
<dbReference type="GO" id="GO:0036336">
    <property type="term" value="P:dendritic cell migration"/>
    <property type="evidence" value="ECO:0007669"/>
    <property type="project" value="Ensembl"/>
</dbReference>
<dbReference type="GO" id="GO:0060997">
    <property type="term" value="P:dendritic spine morphogenesis"/>
    <property type="evidence" value="ECO:0000250"/>
    <property type="project" value="UniProtKB"/>
</dbReference>
<dbReference type="GO" id="GO:0035050">
    <property type="term" value="P:embryonic heart tube development"/>
    <property type="evidence" value="ECO:0007669"/>
    <property type="project" value="Ensembl"/>
</dbReference>
<dbReference type="GO" id="GO:0006897">
    <property type="term" value="P:endocytosis"/>
    <property type="evidence" value="ECO:0000318"/>
    <property type="project" value="GO_Central"/>
</dbReference>
<dbReference type="GO" id="GO:0086101">
    <property type="term" value="P:endothelin receptor signaling pathway involved in heart process"/>
    <property type="evidence" value="ECO:0007669"/>
    <property type="project" value="Ensembl"/>
</dbReference>
<dbReference type="GO" id="GO:0030010">
    <property type="term" value="P:establishment of cell polarity"/>
    <property type="evidence" value="ECO:0000318"/>
    <property type="project" value="GO_Central"/>
</dbReference>
<dbReference type="GO" id="GO:0045198">
    <property type="term" value="P:establishment of epithelial cell apical/basal polarity"/>
    <property type="evidence" value="ECO:0000250"/>
    <property type="project" value="UniProtKB"/>
</dbReference>
<dbReference type="GO" id="GO:0046847">
    <property type="term" value="P:filopodium assembly"/>
    <property type="evidence" value="ECO:0000250"/>
    <property type="project" value="AgBase"/>
</dbReference>
<dbReference type="GO" id="GO:0060047">
    <property type="term" value="P:heart contraction"/>
    <property type="evidence" value="ECO:0007669"/>
    <property type="project" value="Ensembl"/>
</dbReference>
<dbReference type="GO" id="GO:0007229">
    <property type="term" value="P:integrin-mediated signaling pathway"/>
    <property type="evidence" value="ECO:0007669"/>
    <property type="project" value="Ensembl"/>
</dbReference>
<dbReference type="GO" id="GO:0045185">
    <property type="term" value="P:maintenance of protein location"/>
    <property type="evidence" value="ECO:0000250"/>
    <property type="project" value="AgBase"/>
</dbReference>
<dbReference type="GO" id="GO:0044788">
    <property type="term" value="P:modulation by host of viral process"/>
    <property type="evidence" value="ECO:0007669"/>
    <property type="project" value="Ensembl"/>
</dbReference>
<dbReference type="GO" id="GO:0031333">
    <property type="term" value="P:negative regulation of protein-containing complex assembly"/>
    <property type="evidence" value="ECO:0000250"/>
    <property type="project" value="AgBase"/>
</dbReference>
<dbReference type="GO" id="GO:0048664">
    <property type="term" value="P:neuron fate determination"/>
    <property type="evidence" value="ECO:0007669"/>
    <property type="project" value="Ensembl"/>
</dbReference>
<dbReference type="GO" id="GO:0038189">
    <property type="term" value="P:neuropilin signaling pathway"/>
    <property type="evidence" value="ECO:0007669"/>
    <property type="project" value="Ensembl"/>
</dbReference>
<dbReference type="GO" id="GO:0007097">
    <property type="term" value="P:nuclear migration"/>
    <property type="evidence" value="ECO:0007669"/>
    <property type="project" value="Ensembl"/>
</dbReference>
<dbReference type="GO" id="GO:0006911">
    <property type="term" value="P:phagocytosis, engulfment"/>
    <property type="evidence" value="ECO:0000250"/>
    <property type="project" value="UniProtKB"/>
</dbReference>
<dbReference type="GO" id="GO:0030307">
    <property type="term" value="P:positive regulation of cell growth"/>
    <property type="evidence" value="ECO:0007669"/>
    <property type="project" value="Ensembl"/>
</dbReference>
<dbReference type="GO" id="GO:0030335">
    <property type="term" value="P:positive regulation of cell migration"/>
    <property type="evidence" value="ECO:0007669"/>
    <property type="project" value="Ensembl"/>
</dbReference>
<dbReference type="GO" id="GO:0032467">
    <property type="term" value="P:positive regulation of cytokinesis"/>
    <property type="evidence" value="ECO:0000250"/>
    <property type="project" value="UniProtKB"/>
</dbReference>
<dbReference type="GO" id="GO:0060501">
    <property type="term" value="P:positive regulation of epithelial cell proliferation involved in lung morphogenesis"/>
    <property type="evidence" value="ECO:0007669"/>
    <property type="project" value="Ensembl"/>
</dbReference>
<dbReference type="GO" id="GO:0051491">
    <property type="term" value="P:positive regulation of filopodium assembly"/>
    <property type="evidence" value="ECO:0007669"/>
    <property type="project" value="Ensembl"/>
</dbReference>
<dbReference type="GO" id="GO:0010592">
    <property type="term" value="P:positive regulation of lamellipodium assembly"/>
    <property type="evidence" value="ECO:0007669"/>
    <property type="project" value="Ensembl"/>
</dbReference>
<dbReference type="GO" id="GO:0043410">
    <property type="term" value="P:positive regulation of MAPK cascade"/>
    <property type="evidence" value="ECO:0007669"/>
    <property type="project" value="Ensembl"/>
</dbReference>
<dbReference type="GO" id="GO:0051897">
    <property type="term" value="P:positive regulation of phosphatidylinositol 3-kinase/protein kinase B signal transduction"/>
    <property type="evidence" value="ECO:0007669"/>
    <property type="project" value="Ensembl"/>
</dbReference>
<dbReference type="GO" id="GO:0048549">
    <property type="term" value="P:positive regulation of pinocytosis"/>
    <property type="evidence" value="ECO:0007669"/>
    <property type="project" value="Ensembl"/>
</dbReference>
<dbReference type="GO" id="GO:0045860">
    <property type="term" value="P:positive regulation of protein kinase activity"/>
    <property type="evidence" value="ECO:0000250"/>
    <property type="project" value="AgBase"/>
</dbReference>
<dbReference type="GO" id="GO:0031274">
    <property type="term" value="P:positive regulation of pseudopodium assembly"/>
    <property type="evidence" value="ECO:0000250"/>
    <property type="project" value="AgBase"/>
</dbReference>
<dbReference type="GO" id="GO:0051496">
    <property type="term" value="P:positive regulation of stress fiber assembly"/>
    <property type="evidence" value="ECO:0007669"/>
    <property type="project" value="Ensembl"/>
</dbReference>
<dbReference type="GO" id="GO:1900026">
    <property type="term" value="P:positive regulation of substrate adhesion-dependent cell spreading"/>
    <property type="evidence" value="ECO:0007669"/>
    <property type="project" value="Ensembl"/>
</dbReference>
<dbReference type="GO" id="GO:0051988">
    <property type="term" value="P:regulation of attachment of spindle microtubules to kinetochore"/>
    <property type="evidence" value="ECO:0000250"/>
    <property type="project" value="UniProtKB"/>
</dbReference>
<dbReference type="GO" id="GO:0051489">
    <property type="term" value="P:regulation of filopodium assembly"/>
    <property type="evidence" value="ECO:0000250"/>
    <property type="project" value="UniProtKB"/>
</dbReference>
<dbReference type="GO" id="GO:0007088">
    <property type="term" value="P:regulation of mitotic nuclear division"/>
    <property type="evidence" value="ECO:0007669"/>
    <property type="project" value="Ensembl"/>
</dbReference>
<dbReference type="GO" id="GO:0099175">
    <property type="term" value="P:regulation of postsynapse organization"/>
    <property type="evidence" value="ECO:0007669"/>
    <property type="project" value="Ensembl"/>
</dbReference>
<dbReference type="GO" id="GO:0007165">
    <property type="term" value="P:signal transduction"/>
    <property type="evidence" value="ECO:0000318"/>
    <property type="project" value="GO_Central"/>
</dbReference>
<dbReference type="GO" id="GO:0007264">
    <property type="term" value="P:small GTPase-mediated signal transduction"/>
    <property type="evidence" value="ECO:0007669"/>
    <property type="project" value="InterPro"/>
</dbReference>
<dbReference type="CDD" id="cd01874">
    <property type="entry name" value="Cdc42"/>
    <property type="match status" value="1"/>
</dbReference>
<dbReference type="FunFam" id="3.40.50.300:FF:000167">
    <property type="entry name" value="Cell division control protein 42 homolog"/>
    <property type="match status" value="1"/>
</dbReference>
<dbReference type="Gene3D" id="3.40.50.300">
    <property type="entry name" value="P-loop containing nucleotide triphosphate hydrolases"/>
    <property type="match status" value="1"/>
</dbReference>
<dbReference type="InterPro" id="IPR037874">
    <property type="entry name" value="Cdc42"/>
</dbReference>
<dbReference type="InterPro" id="IPR027417">
    <property type="entry name" value="P-loop_NTPase"/>
</dbReference>
<dbReference type="InterPro" id="IPR005225">
    <property type="entry name" value="Small_GTP-bd"/>
</dbReference>
<dbReference type="InterPro" id="IPR001806">
    <property type="entry name" value="Small_GTPase"/>
</dbReference>
<dbReference type="InterPro" id="IPR003578">
    <property type="entry name" value="Small_GTPase_Rho"/>
</dbReference>
<dbReference type="NCBIfam" id="TIGR00231">
    <property type="entry name" value="small_GTP"/>
    <property type="match status" value="1"/>
</dbReference>
<dbReference type="PANTHER" id="PTHR24072">
    <property type="entry name" value="RHO FAMILY GTPASE"/>
    <property type="match status" value="1"/>
</dbReference>
<dbReference type="Pfam" id="PF00071">
    <property type="entry name" value="Ras"/>
    <property type="match status" value="1"/>
</dbReference>
<dbReference type="PRINTS" id="PR00449">
    <property type="entry name" value="RASTRNSFRMNG"/>
</dbReference>
<dbReference type="SMART" id="SM00175">
    <property type="entry name" value="RAB"/>
    <property type="match status" value="1"/>
</dbReference>
<dbReference type="SMART" id="SM00173">
    <property type="entry name" value="RAS"/>
    <property type="match status" value="1"/>
</dbReference>
<dbReference type="SMART" id="SM00174">
    <property type="entry name" value="RHO"/>
    <property type="match status" value="1"/>
</dbReference>
<dbReference type="SUPFAM" id="SSF52540">
    <property type="entry name" value="P-loop containing nucleoside triphosphate hydrolases"/>
    <property type="match status" value="1"/>
</dbReference>
<dbReference type="PROSITE" id="PS51420">
    <property type="entry name" value="RHO"/>
    <property type="match status" value="1"/>
</dbReference>
<comment type="function">
    <text evidence="2 3">Plasma membrane-associated small GTPase which cycles between an active GTP-bound and an inactive GDP-bound state. In active state binds to a variety of effector proteins to regulate cellular responses. Involved in epithelial cell polarization processes. Regulates the bipolar attachment of spindle microtubules to kinetochores before chromosome congression in metaphase. Regulates cell migration. Plays a role in the extension and maintenance of the formation of thin, actin-rich surface projections called filopodia. Also plays a role in phagocytosis through organization of the F-actin cytoskeleton associated with forming phagocytic cups.</text>
</comment>
<comment type="catalytic activity">
    <reaction evidence="2 3">
        <text>GTP + H2O = GDP + phosphate + H(+)</text>
        <dbReference type="Rhea" id="RHEA:19669"/>
        <dbReference type="ChEBI" id="CHEBI:15377"/>
        <dbReference type="ChEBI" id="CHEBI:15378"/>
        <dbReference type="ChEBI" id="CHEBI:37565"/>
        <dbReference type="ChEBI" id="CHEBI:43474"/>
        <dbReference type="ChEBI" id="CHEBI:58189"/>
        <dbReference type="EC" id="3.6.5.2"/>
    </reaction>
    <physiologicalReaction direction="left-to-right" evidence="2 3">
        <dbReference type="Rhea" id="RHEA:19670"/>
    </physiologicalReaction>
</comment>
<comment type="activity regulation">
    <text evidence="2 3">Regulated by guanine nucleotide exchange factors (GEFs) which promote the exchange of bound GDP for free GTP, GTPase activating proteins (GAPs) which increase the GTP hydrolysis activity, and GDP dissociation inhibitors which inhibit the dissociation of the nucleotide from the GTPase.</text>
</comment>
<comment type="subcellular location">
    <subcellularLocation>
        <location evidence="5">Cell membrane</location>
        <topology evidence="5">Lipid-anchor</topology>
        <orientation evidence="5">Cytoplasmic side</orientation>
    </subcellularLocation>
    <subcellularLocation>
        <location evidence="3">Cytoplasm</location>
        <location evidence="3">Cytoskeleton</location>
        <location evidence="3">Microtubule organizing center</location>
        <location evidence="3">Centrosome</location>
    </subcellularLocation>
    <subcellularLocation>
        <location evidence="3">Cytoplasm</location>
        <location evidence="3">Cytoskeleton</location>
        <location evidence="3">Spindle</location>
    </subcellularLocation>
    <subcellularLocation>
        <location evidence="3">Midbody</location>
    </subcellularLocation>
    <subcellularLocation>
        <location evidence="2">Cell projection</location>
        <location evidence="2">Dendrite</location>
    </subcellularLocation>
</comment>
<comment type="similarity">
    <text evidence="5">Belongs to the small GTPase superfamily. Rho family. CDC42 subfamily.</text>
</comment>
<proteinExistence type="evidence at transcript level"/>
<reference key="1">
    <citation type="journal article" date="1997" name="Biochim. Biophys. Acta">
        <title>Complete cDNAs for CDC42 from chicken cochlea and mouse liver.</title>
        <authorList>
            <person name="Gong T.W."/>
            <person name="Shin J.J."/>
            <person name="Burmeister M."/>
            <person name="Lomax M.I."/>
        </authorList>
    </citation>
    <scope>NUCLEOTIDE SEQUENCE [MRNA]</scope>
    <source>
        <tissue>Inner ear</tissue>
    </source>
</reference>
<organism>
    <name type="scientific">Gallus gallus</name>
    <name type="common">Chicken</name>
    <dbReference type="NCBI Taxonomy" id="9031"/>
    <lineage>
        <taxon>Eukaryota</taxon>
        <taxon>Metazoa</taxon>
        <taxon>Chordata</taxon>
        <taxon>Craniata</taxon>
        <taxon>Vertebrata</taxon>
        <taxon>Euteleostomi</taxon>
        <taxon>Archelosauria</taxon>
        <taxon>Archosauria</taxon>
        <taxon>Dinosauria</taxon>
        <taxon>Saurischia</taxon>
        <taxon>Theropoda</taxon>
        <taxon>Coelurosauria</taxon>
        <taxon>Aves</taxon>
        <taxon>Neognathae</taxon>
        <taxon>Galloanserae</taxon>
        <taxon>Galliformes</taxon>
        <taxon>Phasianidae</taxon>
        <taxon>Phasianinae</taxon>
        <taxon>Gallus</taxon>
    </lineage>
</organism>
<name>CDC42_CHICK</name>
<evidence type="ECO:0000250" key="1"/>
<evidence type="ECO:0000250" key="2">
    <source>
        <dbReference type="UniProtKB" id="P60766"/>
    </source>
</evidence>
<evidence type="ECO:0000250" key="3">
    <source>
        <dbReference type="UniProtKB" id="P60953"/>
    </source>
</evidence>
<evidence type="ECO:0000255" key="4"/>
<evidence type="ECO:0000305" key="5"/>
<gene>
    <name type="primary">CDC42</name>
</gene>